<organism>
    <name type="scientific">Chromobacterium violaceum (strain ATCC 12472 / DSM 30191 / JCM 1249 / CCUG 213 / NBRC 12614 / NCIMB 9131 / NCTC 9757 / MK)</name>
    <dbReference type="NCBI Taxonomy" id="243365"/>
    <lineage>
        <taxon>Bacteria</taxon>
        <taxon>Pseudomonadati</taxon>
        <taxon>Pseudomonadota</taxon>
        <taxon>Betaproteobacteria</taxon>
        <taxon>Neisseriales</taxon>
        <taxon>Chromobacteriaceae</taxon>
        <taxon>Chromobacterium</taxon>
    </lineage>
</organism>
<accession>Q7NVP1</accession>
<gene>
    <name evidence="1" type="primary">serC</name>
    <name type="ordered locus">CV_2301</name>
</gene>
<keyword id="KW-0028">Amino-acid biosynthesis</keyword>
<keyword id="KW-0032">Aminotransferase</keyword>
<keyword id="KW-0963">Cytoplasm</keyword>
<keyword id="KW-0663">Pyridoxal phosphate</keyword>
<keyword id="KW-0664">Pyridoxine biosynthesis</keyword>
<keyword id="KW-1185">Reference proteome</keyword>
<keyword id="KW-0718">Serine biosynthesis</keyword>
<keyword id="KW-0808">Transferase</keyword>
<proteinExistence type="inferred from homology"/>
<dbReference type="EC" id="2.6.1.52" evidence="1"/>
<dbReference type="EMBL" id="AE016825">
    <property type="protein sequence ID" value="AAQ59973.1"/>
    <property type="molecule type" value="Genomic_DNA"/>
</dbReference>
<dbReference type="RefSeq" id="WP_011135848.1">
    <property type="nucleotide sequence ID" value="NC_005085.1"/>
</dbReference>
<dbReference type="SMR" id="Q7NVP1"/>
<dbReference type="STRING" id="243365.CV_2301"/>
<dbReference type="KEGG" id="cvi:CV_2301"/>
<dbReference type="eggNOG" id="COG1932">
    <property type="taxonomic scope" value="Bacteria"/>
</dbReference>
<dbReference type="HOGENOM" id="CLU_034866_0_2_4"/>
<dbReference type="OrthoDB" id="9809412at2"/>
<dbReference type="UniPathway" id="UPA00135">
    <property type="reaction ID" value="UER00197"/>
</dbReference>
<dbReference type="UniPathway" id="UPA00244">
    <property type="reaction ID" value="UER00311"/>
</dbReference>
<dbReference type="Proteomes" id="UP000001424">
    <property type="component" value="Chromosome"/>
</dbReference>
<dbReference type="GO" id="GO:0005737">
    <property type="term" value="C:cytoplasm"/>
    <property type="evidence" value="ECO:0007669"/>
    <property type="project" value="UniProtKB-SubCell"/>
</dbReference>
<dbReference type="GO" id="GO:0004648">
    <property type="term" value="F:O-phospho-L-serine:2-oxoglutarate aminotransferase activity"/>
    <property type="evidence" value="ECO:0007669"/>
    <property type="project" value="UniProtKB-UniRule"/>
</dbReference>
<dbReference type="GO" id="GO:0030170">
    <property type="term" value="F:pyridoxal phosphate binding"/>
    <property type="evidence" value="ECO:0007669"/>
    <property type="project" value="UniProtKB-UniRule"/>
</dbReference>
<dbReference type="GO" id="GO:0006564">
    <property type="term" value="P:L-serine biosynthetic process"/>
    <property type="evidence" value="ECO:0007669"/>
    <property type="project" value="UniProtKB-UniRule"/>
</dbReference>
<dbReference type="GO" id="GO:0008615">
    <property type="term" value="P:pyridoxine biosynthetic process"/>
    <property type="evidence" value="ECO:0007669"/>
    <property type="project" value="UniProtKB-UniRule"/>
</dbReference>
<dbReference type="CDD" id="cd00611">
    <property type="entry name" value="PSAT_like"/>
    <property type="match status" value="1"/>
</dbReference>
<dbReference type="FunFam" id="3.40.640.10:FF:000010">
    <property type="entry name" value="Phosphoserine aminotransferase"/>
    <property type="match status" value="1"/>
</dbReference>
<dbReference type="FunFam" id="3.90.1150.10:FF:000006">
    <property type="entry name" value="Phosphoserine aminotransferase"/>
    <property type="match status" value="1"/>
</dbReference>
<dbReference type="Gene3D" id="3.90.1150.10">
    <property type="entry name" value="Aspartate Aminotransferase, domain 1"/>
    <property type="match status" value="1"/>
</dbReference>
<dbReference type="Gene3D" id="3.40.640.10">
    <property type="entry name" value="Type I PLP-dependent aspartate aminotransferase-like (Major domain)"/>
    <property type="match status" value="1"/>
</dbReference>
<dbReference type="HAMAP" id="MF_00160">
    <property type="entry name" value="SerC_aminotrans_5"/>
    <property type="match status" value="1"/>
</dbReference>
<dbReference type="InterPro" id="IPR000192">
    <property type="entry name" value="Aminotrans_V_dom"/>
</dbReference>
<dbReference type="InterPro" id="IPR020578">
    <property type="entry name" value="Aminotrans_V_PyrdxlP_BS"/>
</dbReference>
<dbReference type="InterPro" id="IPR022278">
    <property type="entry name" value="Pser_aminoTfrase"/>
</dbReference>
<dbReference type="InterPro" id="IPR015424">
    <property type="entry name" value="PyrdxlP-dep_Trfase"/>
</dbReference>
<dbReference type="InterPro" id="IPR015421">
    <property type="entry name" value="PyrdxlP-dep_Trfase_major"/>
</dbReference>
<dbReference type="InterPro" id="IPR015422">
    <property type="entry name" value="PyrdxlP-dep_Trfase_small"/>
</dbReference>
<dbReference type="NCBIfam" id="NF003764">
    <property type="entry name" value="PRK05355.1"/>
    <property type="match status" value="1"/>
</dbReference>
<dbReference type="NCBIfam" id="TIGR01364">
    <property type="entry name" value="serC_1"/>
    <property type="match status" value="1"/>
</dbReference>
<dbReference type="PANTHER" id="PTHR43247">
    <property type="entry name" value="PHOSPHOSERINE AMINOTRANSFERASE"/>
    <property type="match status" value="1"/>
</dbReference>
<dbReference type="PANTHER" id="PTHR43247:SF1">
    <property type="entry name" value="PHOSPHOSERINE AMINOTRANSFERASE"/>
    <property type="match status" value="1"/>
</dbReference>
<dbReference type="Pfam" id="PF00266">
    <property type="entry name" value="Aminotran_5"/>
    <property type="match status" value="1"/>
</dbReference>
<dbReference type="PIRSF" id="PIRSF000525">
    <property type="entry name" value="SerC"/>
    <property type="match status" value="1"/>
</dbReference>
<dbReference type="SUPFAM" id="SSF53383">
    <property type="entry name" value="PLP-dependent transferases"/>
    <property type="match status" value="1"/>
</dbReference>
<dbReference type="PROSITE" id="PS00595">
    <property type="entry name" value="AA_TRANSFER_CLASS_5"/>
    <property type="match status" value="1"/>
</dbReference>
<reference key="1">
    <citation type="journal article" date="2003" name="Proc. Natl. Acad. Sci. U.S.A.">
        <title>The complete genome sequence of Chromobacterium violaceum reveals remarkable and exploitable bacterial adaptability.</title>
        <authorList>
            <person name="Vasconcelos A.T.R."/>
            <person name="de Almeida D.F."/>
            <person name="Hungria M."/>
            <person name="Guimaraes C.T."/>
            <person name="Antonio R.V."/>
            <person name="Almeida F.C."/>
            <person name="de Almeida L.G.P."/>
            <person name="de Almeida R."/>
            <person name="Alves-Gomes J.A."/>
            <person name="Andrade E.M."/>
            <person name="Araripe J."/>
            <person name="de Araujo M.F.F."/>
            <person name="Astolfi-Filho S."/>
            <person name="Azevedo V."/>
            <person name="Baptista A.J."/>
            <person name="Bataus L.A.M."/>
            <person name="Batista J.S."/>
            <person name="Belo A."/>
            <person name="van den Berg C."/>
            <person name="Bogo M."/>
            <person name="Bonatto S."/>
            <person name="Bordignon J."/>
            <person name="Brigido M.M."/>
            <person name="Brito C.A."/>
            <person name="Brocchi M."/>
            <person name="Burity H.A."/>
            <person name="Camargo A.A."/>
            <person name="Cardoso D.D.P."/>
            <person name="Carneiro N.P."/>
            <person name="Carraro D.M."/>
            <person name="Carvalho C.M.B."/>
            <person name="Cascardo J.C.M."/>
            <person name="Cavada B.S."/>
            <person name="Chueire L.M.O."/>
            <person name="Creczynski-Pasa T.B."/>
            <person name="Cunha-Junior N.C."/>
            <person name="Fagundes N."/>
            <person name="Falcao C.L."/>
            <person name="Fantinatti F."/>
            <person name="Farias I.P."/>
            <person name="Felipe M.S.S."/>
            <person name="Ferrari L.P."/>
            <person name="Ferro J.A."/>
            <person name="Ferro M.I.T."/>
            <person name="Franco G.R."/>
            <person name="Freitas N.S.A."/>
            <person name="Furlan L.R."/>
            <person name="Gazzinelli R.T."/>
            <person name="Gomes E.A."/>
            <person name="Goncalves P.R."/>
            <person name="Grangeiro T.B."/>
            <person name="Grattapaglia D."/>
            <person name="Grisard E.C."/>
            <person name="Hanna E.S."/>
            <person name="Jardim S.N."/>
            <person name="Laurino J."/>
            <person name="Leoi L.C.T."/>
            <person name="Lima L.F.A."/>
            <person name="Loureiro M.F."/>
            <person name="Lyra M.C.C.P."/>
            <person name="Madeira H.M.F."/>
            <person name="Manfio G.P."/>
            <person name="Maranhao A.Q."/>
            <person name="Martins W.S."/>
            <person name="di Mauro S.M.Z."/>
            <person name="de Medeiros S.R.B."/>
            <person name="Meissner R.V."/>
            <person name="Moreira M.A.M."/>
            <person name="Nascimento F.F."/>
            <person name="Nicolas M.F."/>
            <person name="Oliveira J.G."/>
            <person name="Oliveira S.C."/>
            <person name="Paixao R.F.C."/>
            <person name="Parente J.A."/>
            <person name="Pedrosa F.O."/>
            <person name="Pena S.D.J."/>
            <person name="Pereira J.O."/>
            <person name="Pereira M."/>
            <person name="Pinto L.S.R.C."/>
            <person name="Pinto L.S."/>
            <person name="Porto J.I.R."/>
            <person name="Potrich D.P."/>
            <person name="Ramalho-Neto C.E."/>
            <person name="Reis A.M.M."/>
            <person name="Rigo L.U."/>
            <person name="Rondinelli E."/>
            <person name="Santos E.B.P."/>
            <person name="Santos F.R."/>
            <person name="Schneider M.P.C."/>
            <person name="Seuanez H.N."/>
            <person name="Silva A.M.R."/>
            <person name="da Silva A.L.C."/>
            <person name="Silva D.W."/>
            <person name="Silva R."/>
            <person name="Simoes I.C."/>
            <person name="Simon D."/>
            <person name="Soares C.M.A."/>
            <person name="Soares R.B.A."/>
            <person name="Souza E.M."/>
            <person name="Souza K.R.L."/>
            <person name="Souza R.C."/>
            <person name="Steffens M.B.R."/>
            <person name="Steindel M."/>
            <person name="Teixeira S.R."/>
            <person name="Urmenyi T."/>
            <person name="Vettore A."/>
            <person name="Wassem R."/>
            <person name="Zaha A."/>
            <person name="Simpson A.J.G."/>
        </authorList>
    </citation>
    <scope>NUCLEOTIDE SEQUENCE [LARGE SCALE GENOMIC DNA]</scope>
    <source>
        <strain>ATCC 12472 / DSM 30191 / JCM 1249 / CCUG 213 / NBRC 12614 / NCIMB 9131 / NCTC 9757 / MK</strain>
    </source>
</reference>
<protein>
    <recommendedName>
        <fullName evidence="1">Phosphoserine aminotransferase</fullName>
        <ecNumber evidence="1">2.6.1.52</ecNumber>
    </recommendedName>
    <alternativeName>
        <fullName evidence="1">Phosphohydroxythreonine aminotransferase</fullName>
        <shortName evidence="1">PSAT</shortName>
    </alternativeName>
</protein>
<sequence length="362" mass="40160">MAKVYNFSAGPAVLPHQVLAEAQSELLDWHGSGMSVMEMSHRGKEFMEIIHDAEQDLRQLMGIPAGYKVLFLQGGASLQFAMAPLNLLGDKDSIDIVNTGHWSKLAIKEAKRYAKVNVVASSEDRNFCYVPEEAAWQRDPNAAYLHYTSNETIGGLQFPYIPAEQHGVPLVCDMSSDFLSREVDVSRFGMIYAGAQKNIGPSGLTVLLIREDLLGKARADIPTMLNYQVHADADSMYNTPGTYPIYIAGLVFKWLKEQGGVKGIATRNEEKAGLLYHVIDSSGGFYSTHIEQPFRSKMNVVFKLRDEALDEIFLLEARKNGLAQLKGHRAVGGMRASIYNAMPIEGVKSLVNFMQDFARQYG</sequence>
<evidence type="ECO:0000255" key="1">
    <source>
        <dbReference type="HAMAP-Rule" id="MF_00160"/>
    </source>
</evidence>
<comment type="function">
    <text evidence="1">Catalyzes the reversible conversion of 3-phosphohydroxypyruvate to phosphoserine and of 3-hydroxy-2-oxo-4-phosphonooxybutanoate to phosphohydroxythreonine.</text>
</comment>
<comment type="catalytic activity">
    <reaction evidence="1">
        <text>O-phospho-L-serine + 2-oxoglutarate = 3-phosphooxypyruvate + L-glutamate</text>
        <dbReference type="Rhea" id="RHEA:14329"/>
        <dbReference type="ChEBI" id="CHEBI:16810"/>
        <dbReference type="ChEBI" id="CHEBI:18110"/>
        <dbReference type="ChEBI" id="CHEBI:29985"/>
        <dbReference type="ChEBI" id="CHEBI:57524"/>
        <dbReference type="EC" id="2.6.1.52"/>
    </reaction>
</comment>
<comment type="catalytic activity">
    <reaction evidence="1">
        <text>4-(phosphooxy)-L-threonine + 2-oxoglutarate = (R)-3-hydroxy-2-oxo-4-phosphooxybutanoate + L-glutamate</text>
        <dbReference type="Rhea" id="RHEA:16573"/>
        <dbReference type="ChEBI" id="CHEBI:16810"/>
        <dbReference type="ChEBI" id="CHEBI:29985"/>
        <dbReference type="ChEBI" id="CHEBI:58452"/>
        <dbReference type="ChEBI" id="CHEBI:58538"/>
        <dbReference type="EC" id="2.6.1.52"/>
    </reaction>
</comment>
<comment type="cofactor">
    <cofactor evidence="1">
        <name>pyridoxal 5'-phosphate</name>
        <dbReference type="ChEBI" id="CHEBI:597326"/>
    </cofactor>
    <text evidence="1">Binds 1 pyridoxal phosphate per subunit.</text>
</comment>
<comment type="pathway">
    <text evidence="1">Amino-acid biosynthesis; L-serine biosynthesis; L-serine from 3-phospho-D-glycerate: step 2/3.</text>
</comment>
<comment type="pathway">
    <text evidence="1">Cofactor biosynthesis; pyridoxine 5'-phosphate biosynthesis; pyridoxine 5'-phosphate from D-erythrose 4-phosphate: step 3/5.</text>
</comment>
<comment type="subunit">
    <text evidence="1">Homodimer.</text>
</comment>
<comment type="subcellular location">
    <subcellularLocation>
        <location evidence="1">Cytoplasm</location>
    </subcellularLocation>
</comment>
<comment type="similarity">
    <text evidence="1">Belongs to the class-V pyridoxal-phosphate-dependent aminotransferase family. SerC subfamily.</text>
</comment>
<name>SERC_CHRVO</name>
<feature type="chain" id="PRO_0000150164" description="Phosphoserine aminotransferase">
    <location>
        <begin position="1"/>
        <end position="362"/>
    </location>
</feature>
<feature type="binding site" evidence="1">
    <location>
        <position position="42"/>
    </location>
    <ligand>
        <name>L-glutamate</name>
        <dbReference type="ChEBI" id="CHEBI:29985"/>
    </ligand>
</feature>
<feature type="binding site" evidence="1">
    <location>
        <begin position="76"/>
        <end position="77"/>
    </location>
    <ligand>
        <name>pyridoxal 5'-phosphate</name>
        <dbReference type="ChEBI" id="CHEBI:597326"/>
    </ligand>
</feature>
<feature type="binding site" evidence="1">
    <location>
        <position position="102"/>
    </location>
    <ligand>
        <name>pyridoxal 5'-phosphate</name>
        <dbReference type="ChEBI" id="CHEBI:597326"/>
    </ligand>
</feature>
<feature type="binding site" evidence="1">
    <location>
        <position position="152"/>
    </location>
    <ligand>
        <name>pyridoxal 5'-phosphate</name>
        <dbReference type="ChEBI" id="CHEBI:597326"/>
    </ligand>
</feature>
<feature type="binding site" evidence="1">
    <location>
        <position position="173"/>
    </location>
    <ligand>
        <name>pyridoxal 5'-phosphate</name>
        <dbReference type="ChEBI" id="CHEBI:597326"/>
    </ligand>
</feature>
<feature type="binding site" evidence="1">
    <location>
        <position position="196"/>
    </location>
    <ligand>
        <name>pyridoxal 5'-phosphate</name>
        <dbReference type="ChEBI" id="CHEBI:597326"/>
    </ligand>
</feature>
<feature type="binding site" evidence="1">
    <location>
        <begin position="238"/>
        <end position="239"/>
    </location>
    <ligand>
        <name>pyridoxal 5'-phosphate</name>
        <dbReference type="ChEBI" id="CHEBI:597326"/>
    </ligand>
</feature>
<feature type="modified residue" description="N6-(pyridoxal phosphate)lysine" evidence="1">
    <location>
        <position position="197"/>
    </location>
</feature>